<evidence type="ECO:0000250" key="1"/>
<evidence type="ECO:0000250" key="2">
    <source>
        <dbReference type="UniProtKB" id="Q16629"/>
    </source>
</evidence>
<evidence type="ECO:0000250" key="3">
    <source>
        <dbReference type="UniProtKB" id="Q8BL97"/>
    </source>
</evidence>
<evidence type="ECO:0000255" key="4">
    <source>
        <dbReference type="PROSITE-ProRule" id="PRU00047"/>
    </source>
</evidence>
<evidence type="ECO:0000255" key="5">
    <source>
        <dbReference type="PROSITE-ProRule" id="PRU00176"/>
    </source>
</evidence>
<evidence type="ECO:0000256" key="6">
    <source>
        <dbReference type="SAM" id="MobiDB-lite"/>
    </source>
</evidence>
<evidence type="ECO:0000305" key="7"/>
<protein>
    <recommendedName>
        <fullName>Serine/arginine-rich splicing factor 7</fullName>
    </recommendedName>
    <alternativeName>
        <fullName>Splicing factor, arginine/serine-rich 7</fullName>
    </alternativeName>
</protein>
<dbReference type="EMBL" id="BC102184">
    <property type="protein sequence ID" value="AAI02185.1"/>
    <property type="molecule type" value="mRNA"/>
</dbReference>
<dbReference type="RefSeq" id="NP_001029449.1">
    <property type="nucleotide sequence ID" value="NM_001034277.2"/>
</dbReference>
<dbReference type="BMRB" id="Q3T106"/>
<dbReference type="SMR" id="Q3T106"/>
<dbReference type="FunCoup" id="Q3T106">
    <property type="interactions" value="3148"/>
</dbReference>
<dbReference type="STRING" id="9913.ENSBTAP00000033048"/>
<dbReference type="PaxDb" id="9913-ENSBTAP00000033048"/>
<dbReference type="PeptideAtlas" id="Q3T106"/>
<dbReference type="GeneID" id="507066"/>
<dbReference type="KEGG" id="bta:507066"/>
<dbReference type="CTD" id="6432"/>
<dbReference type="VEuPathDB" id="HostDB:ENSBTAG00000014891"/>
<dbReference type="eggNOG" id="KOG0107">
    <property type="taxonomic scope" value="Eukaryota"/>
</dbReference>
<dbReference type="HOGENOM" id="CLU_012062_20_0_1"/>
<dbReference type="InParanoid" id="Q3T106"/>
<dbReference type="OMA" id="HGPLNCK"/>
<dbReference type="OrthoDB" id="5970at2759"/>
<dbReference type="TreeFam" id="TF351858"/>
<dbReference type="Reactome" id="R-BTA-159236">
    <property type="pathway name" value="Transport of Mature mRNA derived from an Intron-Containing Transcript"/>
</dbReference>
<dbReference type="Reactome" id="R-BTA-72163">
    <property type="pathway name" value="mRNA Splicing - Major Pathway"/>
</dbReference>
<dbReference type="Reactome" id="R-BTA-72165">
    <property type="pathway name" value="mRNA Splicing - Minor Pathway"/>
</dbReference>
<dbReference type="Reactome" id="R-BTA-72187">
    <property type="pathway name" value="mRNA 3'-end processing"/>
</dbReference>
<dbReference type="Reactome" id="R-BTA-72203">
    <property type="pathway name" value="Processing of Capped Intron-Containing Pre-mRNA"/>
</dbReference>
<dbReference type="Reactome" id="R-BTA-73856">
    <property type="pathway name" value="RNA Polymerase II Transcription Termination"/>
</dbReference>
<dbReference type="Proteomes" id="UP000009136">
    <property type="component" value="Chromosome 11"/>
</dbReference>
<dbReference type="Bgee" id="ENSBTAG00000014891">
    <property type="expression patterns" value="Expressed in retropharyngeal lymph node and 107 other cell types or tissues"/>
</dbReference>
<dbReference type="GO" id="GO:0005737">
    <property type="term" value="C:cytoplasm"/>
    <property type="evidence" value="ECO:0007669"/>
    <property type="project" value="UniProtKB-SubCell"/>
</dbReference>
<dbReference type="GO" id="GO:0016607">
    <property type="term" value="C:nuclear speck"/>
    <property type="evidence" value="ECO:0000318"/>
    <property type="project" value="GO_Central"/>
</dbReference>
<dbReference type="GO" id="GO:0003729">
    <property type="term" value="F:mRNA binding"/>
    <property type="evidence" value="ECO:0000318"/>
    <property type="project" value="GO_Central"/>
</dbReference>
<dbReference type="GO" id="GO:0008270">
    <property type="term" value="F:zinc ion binding"/>
    <property type="evidence" value="ECO:0007669"/>
    <property type="project" value="UniProtKB-KW"/>
</dbReference>
<dbReference type="GO" id="GO:0045292">
    <property type="term" value="P:mRNA cis splicing, via spliceosome"/>
    <property type="evidence" value="ECO:0000318"/>
    <property type="project" value="GO_Central"/>
</dbReference>
<dbReference type="GO" id="GO:0051028">
    <property type="term" value="P:mRNA transport"/>
    <property type="evidence" value="ECO:0007669"/>
    <property type="project" value="UniProtKB-KW"/>
</dbReference>
<dbReference type="GO" id="GO:0048025">
    <property type="term" value="P:negative regulation of mRNA splicing, via spliceosome"/>
    <property type="evidence" value="ECO:0000250"/>
    <property type="project" value="UniProtKB"/>
</dbReference>
<dbReference type="CDD" id="cd12646">
    <property type="entry name" value="RRM_SRSF7"/>
    <property type="match status" value="1"/>
</dbReference>
<dbReference type="FunFam" id="3.30.70.330:FF:000078">
    <property type="entry name" value="serine/arginine-rich splicing factor 7 isoform X1"/>
    <property type="match status" value="1"/>
</dbReference>
<dbReference type="FunFam" id="4.10.60.10:FF:000027">
    <property type="entry name" value="serine/arginine-rich splicing factor 7 isoform X1"/>
    <property type="match status" value="1"/>
</dbReference>
<dbReference type="Gene3D" id="3.30.70.330">
    <property type="match status" value="1"/>
</dbReference>
<dbReference type="Gene3D" id="4.10.60.10">
    <property type="entry name" value="Zinc finger, CCHC-type"/>
    <property type="match status" value="1"/>
</dbReference>
<dbReference type="InterPro" id="IPR012677">
    <property type="entry name" value="Nucleotide-bd_a/b_plait_sf"/>
</dbReference>
<dbReference type="InterPro" id="IPR035979">
    <property type="entry name" value="RBD_domain_sf"/>
</dbReference>
<dbReference type="InterPro" id="IPR000504">
    <property type="entry name" value="RRM_dom"/>
</dbReference>
<dbReference type="InterPro" id="IPR034651">
    <property type="entry name" value="SRSF7_RRM"/>
</dbReference>
<dbReference type="InterPro" id="IPR001878">
    <property type="entry name" value="Znf_CCHC"/>
</dbReference>
<dbReference type="InterPro" id="IPR036875">
    <property type="entry name" value="Znf_CCHC_sf"/>
</dbReference>
<dbReference type="PANTHER" id="PTHR48038">
    <property type="entry name" value="RIBONUCLEOPROTEIN RB97D"/>
    <property type="match status" value="1"/>
</dbReference>
<dbReference type="PANTHER" id="PTHR48038:SF3">
    <property type="entry name" value="SPLICING FACTOR, ARGININE_SERINE-RICH 1-RELATED"/>
    <property type="match status" value="1"/>
</dbReference>
<dbReference type="Pfam" id="PF00076">
    <property type="entry name" value="RRM_1"/>
    <property type="match status" value="1"/>
</dbReference>
<dbReference type="SMART" id="SM00360">
    <property type="entry name" value="RRM"/>
    <property type="match status" value="1"/>
</dbReference>
<dbReference type="SUPFAM" id="SSF57756">
    <property type="entry name" value="Retrovirus zinc finger-like domains"/>
    <property type="match status" value="1"/>
</dbReference>
<dbReference type="SUPFAM" id="SSF54928">
    <property type="entry name" value="RNA-binding domain, RBD"/>
    <property type="match status" value="1"/>
</dbReference>
<dbReference type="PROSITE" id="PS50102">
    <property type="entry name" value="RRM"/>
    <property type="match status" value="1"/>
</dbReference>
<dbReference type="PROSITE" id="PS50158">
    <property type="entry name" value="ZF_CCHC"/>
    <property type="match status" value="1"/>
</dbReference>
<sequence>MSRYGRYGGETKVYVGNLGTGAGKGELERAFSYYGPLRTVWIARNPPGFAFVEFEDPRDAEDAVRGLDGKVICGSRVRVELSTGMPRRSRFDRPPARRPFDPNDRCYECGEKGHYAYDCHRYSRRRRSRSRSRSHSRSRGRRYSRSRSRSRGRRSRSASPRRSRSVSLRRSRSASLRRSRSGSIKGSRSRSRSRSRSRSLSRPRSSRSKSRSPSPKRSRSPSGSPRRSASPERVD</sequence>
<reference key="1">
    <citation type="submission" date="2005-08" db="EMBL/GenBank/DDBJ databases">
        <authorList>
            <consortium name="NIH - Mammalian Gene Collection (MGC) project"/>
        </authorList>
    </citation>
    <scope>NUCLEOTIDE SEQUENCE [LARGE SCALE MRNA]</scope>
    <source>
        <strain>Crossbred X Angus</strain>
        <tissue>Ileum</tissue>
    </source>
</reference>
<feature type="chain" id="PRO_0000284385" description="Serine/arginine-rich splicing factor 7">
    <location>
        <begin position="1"/>
        <end position="235"/>
    </location>
</feature>
<feature type="domain" description="RRM" evidence="5">
    <location>
        <begin position="11"/>
        <end position="84"/>
    </location>
</feature>
<feature type="repeat" description="1">
    <location>
        <begin position="153"/>
        <end position="160"/>
    </location>
</feature>
<feature type="repeat" description="2">
    <location>
        <begin position="161"/>
        <end position="168"/>
    </location>
</feature>
<feature type="repeat" description="3">
    <location>
        <begin position="169"/>
        <end position="176"/>
    </location>
</feature>
<feature type="repeat" description="4">
    <location>
        <begin position="177"/>
        <end position="184"/>
    </location>
</feature>
<feature type="repeat" description="5; approximate">
    <location>
        <begin position="208"/>
        <end position="215"/>
    </location>
</feature>
<feature type="repeat" description="6; approximate">
    <location>
        <begin position="216"/>
        <end position="223"/>
    </location>
</feature>
<feature type="zinc finger region" description="CCHC-type" evidence="4">
    <location>
        <begin position="104"/>
        <end position="120"/>
    </location>
</feature>
<feature type="region of interest" description="Sufficient for interaction with NXF1" evidence="1">
    <location>
        <begin position="81"/>
        <end position="98"/>
    </location>
</feature>
<feature type="region of interest" description="Disordered" evidence="6">
    <location>
        <begin position="123"/>
        <end position="235"/>
    </location>
</feature>
<feature type="region of interest" description="6 X 8 AA repeats of R-R-S-R-S-X-S-X">
    <location>
        <begin position="153"/>
        <end position="223"/>
    </location>
</feature>
<feature type="compositionally biased region" description="Basic residues" evidence="6">
    <location>
        <begin position="123"/>
        <end position="180"/>
    </location>
</feature>
<feature type="compositionally biased region" description="Basic residues" evidence="6">
    <location>
        <begin position="187"/>
        <end position="219"/>
    </location>
</feature>
<feature type="modified residue" description="N6-acetyllysine; alternate" evidence="2">
    <location>
        <position position="24"/>
    </location>
</feature>
<feature type="modified residue" description="Phosphoserine" evidence="2">
    <location>
        <position position="32"/>
    </location>
</feature>
<feature type="modified residue" description="Phosphoserine" evidence="2">
    <location>
        <position position="163"/>
    </location>
</feature>
<feature type="modified residue" description="Phosphoserine" evidence="2">
    <location>
        <position position="165"/>
    </location>
</feature>
<feature type="modified residue" description="Phosphoserine" evidence="2">
    <location>
        <position position="167"/>
    </location>
</feature>
<feature type="modified residue" description="Phosphoserine" evidence="3">
    <location>
        <position position="181"/>
    </location>
</feature>
<feature type="modified residue" description="Phosphoserine" evidence="3">
    <location>
        <position position="183"/>
    </location>
</feature>
<feature type="modified residue" description="Phosphoserine" evidence="2">
    <location>
        <position position="189"/>
    </location>
</feature>
<feature type="modified residue" description="Phosphoserine" evidence="2">
    <location>
        <position position="191"/>
    </location>
</feature>
<feature type="modified residue" description="Phosphoserine" evidence="2">
    <location>
        <position position="193"/>
    </location>
</feature>
<feature type="modified residue" description="Phosphoserine" evidence="2">
    <location>
        <position position="228"/>
    </location>
</feature>
<feature type="modified residue" description="Phosphoserine" evidence="2">
    <location>
        <position position="230"/>
    </location>
</feature>
<feature type="cross-link" description="Glycyl lysine isopeptide (Lys-Gly) (interchain with G-Cter in SUMO2); alternate" evidence="2">
    <location>
        <position position="24"/>
    </location>
</feature>
<comment type="function">
    <text evidence="2">Required for pre-mRNA splicing. Represses the splicing of MAPT/Tau exon 10. May function as export adapter involved in mRNA nuclear export such as of histone H2A. Binds mRNA which is thought to be transferred to the NXF1-NXT1 heterodimer for export (TAP/NXF1 pathway); enhances NXF1-NXT1 RNA-binding activity. RNA-binding is semi-sequence specific (By similarity).</text>
</comment>
<comment type="subunit">
    <text evidence="2 3">Found in large molecular weight complexes containing CCNL1 and the p110 isoforms of either CDC2L1 or CDC2L2. Interacts with CCNL2 and CPSF6. Interacts with NXF1 (By similarity). Interacts with YTHDC1 (By similarity).</text>
</comment>
<comment type="subcellular location">
    <subcellularLocation>
        <location evidence="2">Nucleus</location>
    </subcellularLocation>
    <subcellularLocation>
        <location evidence="2">Cytoplasm</location>
    </subcellularLocation>
</comment>
<comment type="PTM">
    <text evidence="7">Extensively phosphorylated on serine residues in the RS domain.</text>
</comment>
<comment type="similarity">
    <text evidence="7">Belongs to the splicing factor SR family.</text>
</comment>
<keyword id="KW-0007">Acetylation</keyword>
<keyword id="KW-0963">Cytoplasm</keyword>
<keyword id="KW-1017">Isopeptide bond</keyword>
<keyword id="KW-0479">Metal-binding</keyword>
<keyword id="KW-0507">mRNA processing</keyword>
<keyword id="KW-0508">mRNA splicing</keyword>
<keyword id="KW-0509">mRNA transport</keyword>
<keyword id="KW-0539">Nucleus</keyword>
<keyword id="KW-0597">Phosphoprotein</keyword>
<keyword id="KW-1185">Reference proteome</keyword>
<keyword id="KW-0677">Repeat</keyword>
<keyword id="KW-0678">Repressor</keyword>
<keyword id="KW-0694">RNA-binding</keyword>
<keyword id="KW-0813">Transport</keyword>
<keyword id="KW-0832">Ubl conjugation</keyword>
<keyword id="KW-0862">Zinc</keyword>
<keyword id="KW-0863">Zinc-finger</keyword>
<organism>
    <name type="scientific">Bos taurus</name>
    <name type="common">Bovine</name>
    <dbReference type="NCBI Taxonomy" id="9913"/>
    <lineage>
        <taxon>Eukaryota</taxon>
        <taxon>Metazoa</taxon>
        <taxon>Chordata</taxon>
        <taxon>Craniata</taxon>
        <taxon>Vertebrata</taxon>
        <taxon>Euteleostomi</taxon>
        <taxon>Mammalia</taxon>
        <taxon>Eutheria</taxon>
        <taxon>Laurasiatheria</taxon>
        <taxon>Artiodactyla</taxon>
        <taxon>Ruminantia</taxon>
        <taxon>Pecora</taxon>
        <taxon>Bovidae</taxon>
        <taxon>Bovinae</taxon>
        <taxon>Bos</taxon>
    </lineage>
</organism>
<proteinExistence type="evidence at transcript level"/>
<name>SRSF7_BOVIN</name>
<gene>
    <name type="primary">SRSF7</name>
    <name type="synonym">SFRS7</name>
</gene>
<accession>Q3T106</accession>